<name>HIS81_DECAR</name>
<feature type="chain" id="PRO_0000153352" description="Histidinol-phosphate aminotransferase 1">
    <location>
        <begin position="1"/>
        <end position="362"/>
    </location>
</feature>
<feature type="modified residue" description="N6-(pyridoxal phosphate)lysine" evidence="1">
    <location>
        <position position="226"/>
    </location>
</feature>
<comment type="catalytic activity">
    <reaction evidence="1">
        <text>L-histidinol phosphate + 2-oxoglutarate = 3-(imidazol-4-yl)-2-oxopropyl phosphate + L-glutamate</text>
        <dbReference type="Rhea" id="RHEA:23744"/>
        <dbReference type="ChEBI" id="CHEBI:16810"/>
        <dbReference type="ChEBI" id="CHEBI:29985"/>
        <dbReference type="ChEBI" id="CHEBI:57766"/>
        <dbReference type="ChEBI" id="CHEBI:57980"/>
        <dbReference type="EC" id="2.6.1.9"/>
    </reaction>
</comment>
<comment type="cofactor">
    <cofactor evidence="1">
        <name>pyridoxal 5'-phosphate</name>
        <dbReference type="ChEBI" id="CHEBI:597326"/>
    </cofactor>
</comment>
<comment type="pathway">
    <text evidence="1">Amino-acid biosynthesis; L-histidine biosynthesis; L-histidine from 5-phospho-alpha-D-ribose 1-diphosphate: step 7/9.</text>
</comment>
<comment type="subunit">
    <text evidence="1">Homodimer.</text>
</comment>
<comment type="similarity">
    <text evidence="1">Belongs to the class-II pyridoxal-phosphate-dependent aminotransferase family. Histidinol-phosphate aminotransferase subfamily.</text>
</comment>
<gene>
    <name evidence="1" type="primary">hisC1</name>
    <name type="ordered locus">Daro_1233</name>
</gene>
<keyword id="KW-0028">Amino-acid biosynthesis</keyword>
<keyword id="KW-0032">Aminotransferase</keyword>
<keyword id="KW-0368">Histidine biosynthesis</keyword>
<keyword id="KW-0663">Pyridoxal phosphate</keyword>
<keyword id="KW-0808">Transferase</keyword>
<sequence length="362" mass="39502">MSLADQALSYVRAISPYQPGKPITELAREMGIPVEKIVKLASNENPLGMSPKARKAVEAAISGIERYPDQFDLIAKVAERCGVSSNQIVLGNGSNDVLDLIARVFLAPGRSAVFAQHAFAVYPLATLSTGAELISTPAKNYGHDLNAMRAAIRPDTRIVWIANPNNPTGNFLPYPEVRAFLEVVPKDVVVVLDEAYNEYIPPAERVDTATWIKDFPNLVVCRTFSKIFGLAGLRVGYALASTEVADLMNRIRQPFNVNNLAIAAAVAALDDHLFVADSYELNRRGMEQIIAGLKRFGLEHIPSHGNFVTFRAGDAAVVNQKLLKQGVIVRPIGGYGLPEWLRVTIGTEPENARFLEALEKAL</sequence>
<evidence type="ECO:0000255" key="1">
    <source>
        <dbReference type="HAMAP-Rule" id="MF_01023"/>
    </source>
</evidence>
<dbReference type="EC" id="2.6.1.9" evidence="1"/>
<dbReference type="EMBL" id="CP000089">
    <property type="protein sequence ID" value="AAZ45989.1"/>
    <property type="molecule type" value="Genomic_DNA"/>
</dbReference>
<dbReference type="SMR" id="Q47GP2"/>
<dbReference type="STRING" id="159087.Daro_1233"/>
<dbReference type="KEGG" id="dar:Daro_1233"/>
<dbReference type="eggNOG" id="COG0079">
    <property type="taxonomic scope" value="Bacteria"/>
</dbReference>
<dbReference type="HOGENOM" id="CLU_017584_3_3_4"/>
<dbReference type="OrthoDB" id="9813612at2"/>
<dbReference type="UniPathway" id="UPA00031">
    <property type="reaction ID" value="UER00012"/>
</dbReference>
<dbReference type="GO" id="GO:0004400">
    <property type="term" value="F:histidinol-phosphate transaminase activity"/>
    <property type="evidence" value="ECO:0007669"/>
    <property type="project" value="UniProtKB-UniRule"/>
</dbReference>
<dbReference type="GO" id="GO:0030170">
    <property type="term" value="F:pyridoxal phosphate binding"/>
    <property type="evidence" value="ECO:0007669"/>
    <property type="project" value="InterPro"/>
</dbReference>
<dbReference type="GO" id="GO:0000105">
    <property type="term" value="P:L-histidine biosynthetic process"/>
    <property type="evidence" value="ECO:0007669"/>
    <property type="project" value="UniProtKB-UniRule"/>
</dbReference>
<dbReference type="CDD" id="cd00609">
    <property type="entry name" value="AAT_like"/>
    <property type="match status" value="1"/>
</dbReference>
<dbReference type="Gene3D" id="3.90.1150.10">
    <property type="entry name" value="Aspartate Aminotransferase, domain 1"/>
    <property type="match status" value="1"/>
</dbReference>
<dbReference type="Gene3D" id="3.40.640.10">
    <property type="entry name" value="Type I PLP-dependent aspartate aminotransferase-like (Major domain)"/>
    <property type="match status" value="1"/>
</dbReference>
<dbReference type="HAMAP" id="MF_01023">
    <property type="entry name" value="HisC_aminotrans_2"/>
    <property type="match status" value="1"/>
</dbReference>
<dbReference type="InterPro" id="IPR004839">
    <property type="entry name" value="Aminotransferase_I/II_large"/>
</dbReference>
<dbReference type="InterPro" id="IPR005861">
    <property type="entry name" value="HisP_aminotrans"/>
</dbReference>
<dbReference type="InterPro" id="IPR050106">
    <property type="entry name" value="HistidinolP_aminotransfase"/>
</dbReference>
<dbReference type="InterPro" id="IPR015424">
    <property type="entry name" value="PyrdxlP-dep_Trfase"/>
</dbReference>
<dbReference type="InterPro" id="IPR015421">
    <property type="entry name" value="PyrdxlP-dep_Trfase_major"/>
</dbReference>
<dbReference type="InterPro" id="IPR015422">
    <property type="entry name" value="PyrdxlP-dep_Trfase_small"/>
</dbReference>
<dbReference type="NCBIfam" id="TIGR01141">
    <property type="entry name" value="hisC"/>
    <property type="match status" value="1"/>
</dbReference>
<dbReference type="PANTHER" id="PTHR43643:SF3">
    <property type="entry name" value="HISTIDINOL-PHOSPHATE AMINOTRANSFERASE"/>
    <property type="match status" value="1"/>
</dbReference>
<dbReference type="PANTHER" id="PTHR43643">
    <property type="entry name" value="HISTIDINOL-PHOSPHATE AMINOTRANSFERASE 2"/>
    <property type="match status" value="1"/>
</dbReference>
<dbReference type="Pfam" id="PF00155">
    <property type="entry name" value="Aminotran_1_2"/>
    <property type="match status" value="1"/>
</dbReference>
<dbReference type="SUPFAM" id="SSF53383">
    <property type="entry name" value="PLP-dependent transferases"/>
    <property type="match status" value="1"/>
</dbReference>
<accession>Q47GP2</accession>
<protein>
    <recommendedName>
        <fullName evidence="1">Histidinol-phosphate aminotransferase 1</fullName>
        <ecNumber evidence="1">2.6.1.9</ecNumber>
    </recommendedName>
    <alternativeName>
        <fullName evidence="1">Imidazole acetol-phosphate transaminase 1</fullName>
    </alternativeName>
</protein>
<organism>
    <name type="scientific">Dechloromonas aromatica (strain RCB)</name>
    <dbReference type="NCBI Taxonomy" id="159087"/>
    <lineage>
        <taxon>Bacteria</taxon>
        <taxon>Pseudomonadati</taxon>
        <taxon>Pseudomonadota</taxon>
        <taxon>Betaproteobacteria</taxon>
        <taxon>Rhodocyclales</taxon>
        <taxon>Azonexaceae</taxon>
        <taxon>Dechloromonas</taxon>
    </lineage>
</organism>
<reference key="1">
    <citation type="journal article" date="2009" name="BMC Genomics">
        <title>Metabolic analysis of the soil microbe Dechloromonas aromatica str. RCB: indications of a surprisingly complex life-style and cryptic anaerobic pathways for aromatic degradation.</title>
        <authorList>
            <person name="Salinero K.K."/>
            <person name="Keller K."/>
            <person name="Feil W.S."/>
            <person name="Feil H."/>
            <person name="Trong S."/>
            <person name="Di Bartolo G."/>
            <person name="Lapidus A."/>
        </authorList>
    </citation>
    <scope>NUCLEOTIDE SEQUENCE [LARGE SCALE GENOMIC DNA]</scope>
    <source>
        <strain>RCB</strain>
    </source>
</reference>
<proteinExistence type="inferred from homology"/>